<gene>
    <name type="primary">PPT2</name>
    <name type="ordered locus">ACR129W</name>
</gene>
<proteinExistence type="inferred from homology"/>
<reference key="1">
    <citation type="journal article" date="2004" name="Science">
        <title>The Ashbya gossypii genome as a tool for mapping the ancient Saccharomyces cerevisiae genome.</title>
        <authorList>
            <person name="Dietrich F.S."/>
            <person name="Voegeli S."/>
            <person name="Brachat S."/>
            <person name="Lerch A."/>
            <person name="Gates K."/>
            <person name="Steiner S."/>
            <person name="Mohr C."/>
            <person name="Poehlmann R."/>
            <person name="Luedi P."/>
            <person name="Choi S."/>
            <person name="Wing R.A."/>
            <person name="Flavier A."/>
            <person name="Gaffney T.D."/>
            <person name="Philippsen P."/>
        </authorList>
    </citation>
    <scope>NUCLEOTIDE SEQUENCE [LARGE SCALE GENOMIC DNA]</scope>
    <source>
        <strain>ATCC 10895 / CBS 109.51 / FGSC 9923 / NRRL Y-1056</strain>
    </source>
</reference>
<reference key="2">
    <citation type="journal article" date="2013" name="G3 (Bethesda)">
        <title>Genomes of Ashbya fungi isolated from insects reveal four mating-type loci, numerous translocations, lack of transposons, and distinct gene duplications.</title>
        <authorList>
            <person name="Dietrich F.S."/>
            <person name="Voegeli S."/>
            <person name="Kuo S."/>
            <person name="Philippsen P."/>
        </authorList>
    </citation>
    <scope>GENOME REANNOTATION</scope>
    <scope>SEQUENCE REVISION TO 37</scope>
    <source>
        <strain>ATCC 10895 / CBS 109.51 / FGSC 9923 / NRRL Y-1056</strain>
    </source>
</reference>
<keyword id="KW-0275">Fatty acid biosynthesis</keyword>
<keyword id="KW-0276">Fatty acid metabolism</keyword>
<keyword id="KW-0444">Lipid biosynthesis</keyword>
<keyword id="KW-0443">Lipid metabolism</keyword>
<keyword id="KW-0496">Mitochondrion</keyword>
<keyword id="KW-1185">Reference proteome</keyword>
<keyword id="KW-0808">Transferase</keyword>
<name>PPT2_EREGS</name>
<accession>Q75BZ1</accession>
<protein>
    <recommendedName>
        <fullName>Mitochondrial holo-[acyl-carrier-protein] synthase</fullName>
        <shortName>Mitochondrial holo-ACP synthase</shortName>
        <ecNumber>2.7.8.7</ecNumber>
    </recommendedName>
    <alternativeName>
        <fullName>4'-phosphopantetheinyl transferase PPT2</fullName>
        <shortName>PPTase</shortName>
    </alternativeName>
</protein>
<comment type="function">
    <text evidence="1">Transfers the 4'-phosphopantetheine moiety from coenzyme A to a Ser of mitochondrial acyl-carrier-protein.</text>
</comment>
<comment type="catalytic activity">
    <reaction>
        <text>apo-[ACP] + CoA = holo-[ACP] + adenosine 3',5'-bisphosphate + H(+)</text>
        <dbReference type="Rhea" id="RHEA:12068"/>
        <dbReference type="Rhea" id="RHEA-COMP:9685"/>
        <dbReference type="Rhea" id="RHEA-COMP:9690"/>
        <dbReference type="ChEBI" id="CHEBI:15378"/>
        <dbReference type="ChEBI" id="CHEBI:29999"/>
        <dbReference type="ChEBI" id="CHEBI:57287"/>
        <dbReference type="ChEBI" id="CHEBI:58343"/>
        <dbReference type="ChEBI" id="CHEBI:64479"/>
        <dbReference type="EC" id="2.7.8.7"/>
    </reaction>
</comment>
<comment type="subcellular location">
    <subcellularLocation>
        <location evidence="1">Mitochondrion</location>
    </subcellularLocation>
</comment>
<comment type="similarity">
    <text evidence="2">Belongs to the P-Pant transferase superfamily. AcpS family.</text>
</comment>
<feature type="chain" id="PRO_0000175743" description="Mitochondrial holo-[acyl-carrier-protein] synthase">
    <location>
        <begin position="1"/>
        <end position="174"/>
    </location>
</feature>
<sequence length="174" mass="19283">MLVPHDRMVGNKRRGTMRVLGIGTDLVYMPRVVELLRRMPAGSGAHARFAGKFMHARERAGALGAKDQARYVAGVWAAKEALYKAVAGADAPPAATLYRACYKEADAVGRPTLQVDAGELQRAGHMRFWEERLAGTRFLLSVSHDEDYLVAFVCHVADETFRAPDERQRITKNS</sequence>
<evidence type="ECO:0000250" key="1"/>
<evidence type="ECO:0000305" key="2"/>
<dbReference type="EC" id="2.7.8.7"/>
<dbReference type="EMBL" id="AE016816">
    <property type="protein sequence ID" value="AAS51355.2"/>
    <property type="molecule type" value="Genomic_DNA"/>
</dbReference>
<dbReference type="RefSeq" id="NP_983531.2">
    <property type="nucleotide sequence ID" value="NM_208884.2"/>
</dbReference>
<dbReference type="SMR" id="Q75BZ1"/>
<dbReference type="FunCoup" id="Q75BZ1">
    <property type="interactions" value="40"/>
</dbReference>
<dbReference type="STRING" id="284811.Q75BZ1"/>
<dbReference type="EnsemblFungi" id="AAS51355">
    <property type="protein sequence ID" value="AAS51355"/>
    <property type="gene ID" value="AGOS_ACR129W"/>
</dbReference>
<dbReference type="GeneID" id="4619663"/>
<dbReference type="KEGG" id="ago:AGOS_ACR129W"/>
<dbReference type="eggNOG" id="ENOG502S43T">
    <property type="taxonomic scope" value="Eukaryota"/>
</dbReference>
<dbReference type="HOGENOM" id="CLU_089696_4_1_1"/>
<dbReference type="InParanoid" id="Q75BZ1"/>
<dbReference type="OrthoDB" id="15433at2759"/>
<dbReference type="Proteomes" id="UP000000591">
    <property type="component" value="Chromosome III"/>
</dbReference>
<dbReference type="GO" id="GO:0005739">
    <property type="term" value="C:mitochondrion"/>
    <property type="evidence" value="ECO:0007669"/>
    <property type="project" value="UniProtKB-SubCell"/>
</dbReference>
<dbReference type="GO" id="GO:0008897">
    <property type="term" value="F:holo-[acyl-carrier-protein] synthase activity"/>
    <property type="evidence" value="ECO:0007669"/>
    <property type="project" value="UniProtKB-EC"/>
</dbReference>
<dbReference type="GO" id="GO:0000287">
    <property type="term" value="F:magnesium ion binding"/>
    <property type="evidence" value="ECO:0007669"/>
    <property type="project" value="InterPro"/>
</dbReference>
<dbReference type="GO" id="GO:0006633">
    <property type="term" value="P:fatty acid biosynthetic process"/>
    <property type="evidence" value="ECO:0007669"/>
    <property type="project" value="UniProtKB-KW"/>
</dbReference>
<dbReference type="Gene3D" id="3.90.470.20">
    <property type="entry name" value="4'-phosphopantetheinyl transferase domain"/>
    <property type="match status" value="1"/>
</dbReference>
<dbReference type="InterPro" id="IPR008278">
    <property type="entry name" value="4-PPantetheinyl_Trfase_dom"/>
</dbReference>
<dbReference type="InterPro" id="IPR037143">
    <property type="entry name" value="4-PPantetheinyl_Trfase_dom_sf"/>
</dbReference>
<dbReference type="InterPro" id="IPR016614">
    <property type="entry name" value="PPTase_2"/>
</dbReference>
<dbReference type="Pfam" id="PF01648">
    <property type="entry name" value="ACPS"/>
    <property type="match status" value="1"/>
</dbReference>
<dbReference type="PIRSF" id="PIRSF013370">
    <property type="entry name" value="ACPS_fun"/>
    <property type="match status" value="1"/>
</dbReference>
<dbReference type="SUPFAM" id="SSF56214">
    <property type="entry name" value="4'-phosphopantetheinyl transferase"/>
    <property type="match status" value="1"/>
</dbReference>
<organism>
    <name type="scientific">Eremothecium gossypii (strain ATCC 10895 / CBS 109.51 / FGSC 9923 / NRRL Y-1056)</name>
    <name type="common">Yeast</name>
    <name type="synonym">Ashbya gossypii</name>
    <dbReference type="NCBI Taxonomy" id="284811"/>
    <lineage>
        <taxon>Eukaryota</taxon>
        <taxon>Fungi</taxon>
        <taxon>Dikarya</taxon>
        <taxon>Ascomycota</taxon>
        <taxon>Saccharomycotina</taxon>
        <taxon>Saccharomycetes</taxon>
        <taxon>Saccharomycetales</taxon>
        <taxon>Saccharomycetaceae</taxon>
        <taxon>Eremothecium</taxon>
    </lineage>
</organism>